<proteinExistence type="evidence at protein level"/>
<gene>
    <name type="ordered locus">At5g14050</name>
    <name type="ORF">MUA22.5</name>
</gene>
<keyword id="KW-0539">Nucleus</keyword>
<keyword id="KW-0597">Phosphoprotein</keyword>
<keyword id="KW-1185">Reference proteome</keyword>
<keyword id="KW-0677">Repeat</keyword>
<keyword id="KW-0698">rRNA processing</keyword>
<keyword id="KW-0853">WD repeat</keyword>
<accession>Q9FMU5</accession>
<feature type="chain" id="PRO_0000051407" description="U3 small nucleolar RNA-associated protein 18 homolog">
    <location>
        <begin position="1"/>
        <end position="546"/>
    </location>
</feature>
<feature type="repeat" description="WD 1">
    <location>
        <begin position="242"/>
        <end position="281"/>
    </location>
</feature>
<feature type="repeat" description="WD 2">
    <location>
        <begin position="372"/>
        <end position="411"/>
    </location>
</feature>
<feature type="repeat" description="WD 3">
    <location>
        <begin position="413"/>
        <end position="454"/>
    </location>
</feature>
<feature type="repeat" description="WD 4">
    <location>
        <begin position="509"/>
        <end position="545"/>
    </location>
</feature>
<feature type="region of interest" description="Disordered" evidence="2">
    <location>
        <begin position="1"/>
        <end position="55"/>
    </location>
</feature>
<feature type="region of interest" description="Disordered" evidence="2">
    <location>
        <begin position="94"/>
        <end position="118"/>
    </location>
</feature>
<feature type="region of interest" description="Disordered" evidence="2">
    <location>
        <begin position="177"/>
        <end position="205"/>
    </location>
</feature>
<feature type="short sequence motif" description="DWD box">
    <location>
        <begin position="389"/>
        <end position="404"/>
    </location>
</feature>
<feature type="compositionally biased region" description="Basic and acidic residues" evidence="2">
    <location>
        <begin position="13"/>
        <end position="23"/>
    </location>
</feature>
<feature type="compositionally biased region" description="Acidic residues" evidence="2">
    <location>
        <begin position="24"/>
        <end position="35"/>
    </location>
</feature>
<feature type="compositionally biased region" description="Basic and acidic residues" evidence="2">
    <location>
        <begin position="45"/>
        <end position="55"/>
    </location>
</feature>
<feature type="compositionally biased region" description="Acidic residues" evidence="2">
    <location>
        <begin position="101"/>
        <end position="117"/>
    </location>
</feature>
<feature type="compositionally biased region" description="Acidic residues" evidence="2">
    <location>
        <begin position="193"/>
        <end position="205"/>
    </location>
</feature>
<feature type="modified residue" description="Phosphoserine" evidence="4 5">
    <location>
        <position position="33"/>
    </location>
</feature>
<organism>
    <name type="scientific">Arabidopsis thaliana</name>
    <name type="common">Mouse-ear cress</name>
    <dbReference type="NCBI Taxonomy" id="3702"/>
    <lineage>
        <taxon>Eukaryota</taxon>
        <taxon>Viridiplantae</taxon>
        <taxon>Streptophyta</taxon>
        <taxon>Embryophyta</taxon>
        <taxon>Tracheophyta</taxon>
        <taxon>Spermatophyta</taxon>
        <taxon>Magnoliopsida</taxon>
        <taxon>eudicotyledons</taxon>
        <taxon>Gunneridae</taxon>
        <taxon>Pentapetalae</taxon>
        <taxon>rosids</taxon>
        <taxon>malvids</taxon>
        <taxon>Brassicales</taxon>
        <taxon>Brassicaceae</taxon>
        <taxon>Camelineae</taxon>
        <taxon>Arabidopsis</taxon>
    </lineage>
</organism>
<sequence length="546" mass="60988">MSLSQNAPKSKGIKREELKKQYEDVEDEEEIGSDDDLTRGKRRKTEKEKQKLEESELVEMKKLENLIFGSLYSPVTFGKEEEEDGSALFHVDRSAVRQIPDYEDDGDDDEELSDEENGQVVAIRKGEAAWEDEEEKQINVDIASVNRLRKLRKEENEGLISGSEYIARLRAHHAKLNPGTDWARPDSQIVDGESSDDDDTQDGGVDDILRTNEDLVVKSRGNKLCAGRLEYSKLVDANAADPSNGPINSVHFHQNAQLLLTAGLDRRLRFFQIDGKRNTKIQSIFLEDCPIRKAAFLPNGSQVIVSGRRKFFYSFDLEKAKFDKIGPLVGREEKSLEYFEVSQDSNTIAFVGNEGYILLVSTKTKELIGTLKMNGSVRSLAFSEDGKHLLSSGGDGQVYVWDLRTMKCLYKGVDEGSTCGTSLCSSLNGALFASGTDRGIVNIYKKSEFVGGKRKPIKTVDNLTSKIDFMKFNHDAQILAIVSTMNKNSVKLVHVPSLTVFSNWPPPNSTMHYPRCLDFSPGSGFMAMGNAAGKVLLYKLHHYQNA</sequence>
<protein>
    <recommendedName>
        <fullName>U3 small nucleolar RNA-associated protein 18 homolog</fullName>
    </recommendedName>
</protein>
<name>UTP18_ARATH</name>
<dbReference type="EMBL" id="AB007650">
    <property type="protein sequence ID" value="BAB08284.1"/>
    <property type="molecule type" value="Genomic_DNA"/>
</dbReference>
<dbReference type="EMBL" id="CP002688">
    <property type="protein sequence ID" value="AED91981.1"/>
    <property type="molecule type" value="Genomic_DNA"/>
</dbReference>
<dbReference type="EMBL" id="AY075678">
    <property type="protein sequence ID" value="AAL77685.1"/>
    <property type="molecule type" value="mRNA"/>
</dbReference>
<dbReference type="EMBL" id="AY133634">
    <property type="protein sequence ID" value="AAM91464.1"/>
    <property type="molecule type" value="mRNA"/>
</dbReference>
<dbReference type="RefSeq" id="NP_196909.1">
    <property type="nucleotide sequence ID" value="NM_121408.4"/>
</dbReference>
<dbReference type="SMR" id="Q9FMU5"/>
<dbReference type="BioGRID" id="16532">
    <property type="interactions" value="1"/>
</dbReference>
<dbReference type="FunCoup" id="Q9FMU5">
    <property type="interactions" value="4511"/>
</dbReference>
<dbReference type="IntAct" id="Q9FMU5">
    <property type="interactions" value="1"/>
</dbReference>
<dbReference type="STRING" id="3702.Q9FMU5"/>
<dbReference type="iPTMnet" id="Q9FMU5"/>
<dbReference type="PaxDb" id="3702-AT5G14050.1"/>
<dbReference type="ProteomicsDB" id="228665"/>
<dbReference type="EnsemblPlants" id="AT5G14050.1">
    <property type="protein sequence ID" value="AT5G14050.1"/>
    <property type="gene ID" value="AT5G14050"/>
</dbReference>
<dbReference type="GeneID" id="831254"/>
<dbReference type="Gramene" id="AT5G14050.1">
    <property type="protein sequence ID" value="AT5G14050.1"/>
    <property type="gene ID" value="AT5G14050"/>
</dbReference>
<dbReference type="KEGG" id="ath:AT5G14050"/>
<dbReference type="Araport" id="AT5G14050"/>
<dbReference type="TAIR" id="AT5G14050"/>
<dbReference type="eggNOG" id="KOG2055">
    <property type="taxonomic scope" value="Eukaryota"/>
</dbReference>
<dbReference type="HOGENOM" id="CLU_011055_3_0_1"/>
<dbReference type="InParanoid" id="Q9FMU5"/>
<dbReference type="OMA" id="DLNRATY"/>
<dbReference type="PhylomeDB" id="Q9FMU5"/>
<dbReference type="CD-CODE" id="4299E36E">
    <property type="entry name" value="Nucleolus"/>
</dbReference>
<dbReference type="PRO" id="PR:Q9FMU5"/>
<dbReference type="Proteomes" id="UP000006548">
    <property type="component" value="Chromosome 5"/>
</dbReference>
<dbReference type="ExpressionAtlas" id="Q9FMU5">
    <property type="expression patterns" value="baseline and differential"/>
</dbReference>
<dbReference type="GO" id="GO:0080008">
    <property type="term" value="C:Cul4-RING E3 ubiquitin ligase complex"/>
    <property type="evidence" value="ECO:0000250"/>
    <property type="project" value="TAIR"/>
</dbReference>
<dbReference type="GO" id="GO:0005730">
    <property type="term" value="C:nucleolus"/>
    <property type="evidence" value="ECO:0007669"/>
    <property type="project" value="UniProtKB-SubCell"/>
</dbReference>
<dbReference type="GO" id="GO:0006364">
    <property type="term" value="P:rRNA processing"/>
    <property type="evidence" value="ECO:0007669"/>
    <property type="project" value="UniProtKB-KW"/>
</dbReference>
<dbReference type="FunFam" id="2.130.10.10:FF:000121">
    <property type="entry name" value="U3 small nucleolar RNA-associated protein 18 homolog"/>
    <property type="match status" value="1"/>
</dbReference>
<dbReference type="Gene3D" id="2.130.10.10">
    <property type="entry name" value="YVTN repeat-like/Quinoprotein amine dehydrogenase"/>
    <property type="match status" value="1"/>
</dbReference>
<dbReference type="InterPro" id="IPR045161">
    <property type="entry name" value="Utp18"/>
</dbReference>
<dbReference type="InterPro" id="IPR015943">
    <property type="entry name" value="WD40/YVTN_repeat-like_dom_sf"/>
</dbReference>
<dbReference type="InterPro" id="IPR019775">
    <property type="entry name" value="WD40_repeat_CS"/>
</dbReference>
<dbReference type="InterPro" id="IPR036322">
    <property type="entry name" value="WD40_repeat_dom_sf"/>
</dbReference>
<dbReference type="InterPro" id="IPR001680">
    <property type="entry name" value="WD40_rpt"/>
</dbReference>
<dbReference type="PANTHER" id="PTHR18359:SF0">
    <property type="entry name" value="U3 SMALL NUCLEOLAR RNA-ASSOCIATED PROTEIN 18 HOMOLOG"/>
    <property type="match status" value="1"/>
</dbReference>
<dbReference type="PANTHER" id="PTHR18359">
    <property type="entry name" value="WD-REPEAT PROTEIN-RELATED"/>
    <property type="match status" value="1"/>
</dbReference>
<dbReference type="Pfam" id="PF00400">
    <property type="entry name" value="WD40"/>
    <property type="match status" value="2"/>
</dbReference>
<dbReference type="SMART" id="SM00320">
    <property type="entry name" value="WD40"/>
    <property type="match status" value="5"/>
</dbReference>
<dbReference type="SUPFAM" id="SSF50978">
    <property type="entry name" value="WD40 repeat-like"/>
    <property type="match status" value="1"/>
</dbReference>
<dbReference type="PROSITE" id="PS00678">
    <property type="entry name" value="WD_REPEATS_1"/>
    <property type="match status" value="1"/>
</dbReference>
<dbReference type="PROSITE" id="PS50082">
    <property type="entry name" value="WD_REPEATS_2"/>
    <property type="match status" value="1"/>
</dbReference>
<dbReference type="PROSITE" id="PS50294">
    <property type="entry name" value="WD_REPEATS_REGION"/>
    <property type="match status" value="1"/>
</dbReference>
<comment type="function">
    <text evidence="1">Involved in nucleolar processing of pre-18S ribosomal RNA.</text>
</comment>
<comment type="subcellular location">
    <subcellularLocation>
        <location evidence="1">Nucleus</location>
        <location evidence="1">Nucleolus</location>
    </subcellularLocation>
</comment>
<comment type="domain">
    <text evidence="1">The DWD box is required for interaction with DDB1A.</text>
</comment>
<comment type="similarity">
    <text evidence="3">Belongs to the WD repeat UTP18 family.</text>
</comment>
<evidence type="ECO:0000250" key="1"/>
<evidence type="ECO:0000256" key="2">
    <source>
        <dbReference type="SAM" id="MobiDB-lite"/>
    </source>
</evidence>
<evidence type="ECO:0000305" key="3"/>
<evidence type="ECO:0007744" key="4">
    <source>
    </source>
</evidence>
<evidence type="ECO:0007744" key="5">
    <source>
    </source>
</evidence>
<reference key="1">
    <citation type="journal article" date="1997" name="DNA Res.">
        <title>Structural analysis of Arabidopsis thaliana chromosome 5. III. Sequence features of the regions of 1,191,918 bp covered by seventeen physically assigned P1 clones.</title>
        <authorList>
            <person name="Nakamura Y."/>
            <person name="Sato S."/>
            <person name="Kaneko T."/>
            <person name="Kotani H."/>
            <person name="Asamizu E."/>
            <person name="Miyajima N."/>
            <person name="Tabata S."/>
        </authorList>
    </citation>
    <scope>NUCLEOTIDE SEQUENCE [LARGE SCALE GENOMIC DNA]</scope>
    <source>
        <strain>cv. Columbia</strain>
    </source>
</reference>
<reference key="2">
    <citation type="journal article" date="2017" name="Plant J.">
        <title>Araport11: a complete reannotation of the Arabidopsis thaliana reference genome.</title>
        <authorList>
            <person name="Cheng C.Y."/>
            <person name="Krishnakumar V."/>
            <person name="Chan A.P."/>
            <person name="Thibaud-Nissen F."/>
            <person name="Schobel S."/>
            <person name="Town C.D."/>
        </authorList>
    </citation>
    <scope>GENOME REANNOTATION</scope>
    <source>
        <strain>cv. Columbia</strain>
    </source>
</reference>
<reference key="3">
    <citation type="journal article" date="2003" name="Science">
        <title>Empirical analysis of transcriptional activity in the Arabidopsis genome.</title>
        <authorList>
            <person name="Yamada K."/>
            <person name="Lim J."/>
            <person name="Dale J.M."/>
            <person name="Chen H."/>
            <person name="Shinn P."/>
            <person name="Palm C.J."/>
            <person name="Southwick A.M."/>
            <person name="Wu H.C."/>
            <person name="Kim C.J."/>
            <person name="Nguyen M."/>
            <person name="Pham P.K."/>
            <person name="Cheuk R.F."/>
            <person name="Karlin-Newmann G."/>
            <person name="Liu S.X."/>
            <person name="Lam B."/>
            <person name="Sakano H."/>
            <person name="Wu T."/>
            <person name="Yu G."/>
            <person name="Miranda M."/>
            <person name="Quach H.L."/>
            <person name="Tripp M."/>
            <person name="Chang C.H."/>
            <person name="Lee J.M."/>
            <person name="Toriumi M.J."/>
            <person name="Chan M.M."/>
            <person name="Tang C.C."/>
            <person name="Onodera C.S."/>
            <person name="Deng J.M."/>
            <person name="Akiyama K."/>
            <person name="Ansari Y."/>
            <person name="Arakawa T."/>
            <person name="Banh J."/>
            <person name="Banno F."/>
            <person name="Bowser L."/>
            <person name="Brooks S.Y."/>
            <person name="Carninci P."/>
            <person name="Chao Q."/>
            <person name="Choy N."/>
            <person name="Enju A."/>
            <person name="Goldsmith A.D."/>
            <person name="Gurjal M."/>
            <person name="Hansen N.F."/>
            <person name="Hayashizaki Y."/>
            <person name="Johnson-Hopson C."/>
            <person name="Hsuan V.W."/>
            <person name="Iida K."/>
            <person name="Karnes M."/>
            <person name="Khan S."/>
            <person name="Koesema E."/>
            <person name="Ishida J."/>
            <person name="Jiang P.X."/>
            <person name="Jones T."/>
            <person name="Kawai J."/>
            <person name="Kamiya A."/>
            <person name="Meyers C."/>
            <person name="Nakajima M."/>
            <person name="Narusaka M."/>
            <person name="Seki M."/>
            <person name="Sakurai T."/>
            <person name="Satou M."/>
            <person name="Tamse R."/>
            <person name="Vaysberg M."/>
            <person name="Wallender E.K."/>
            <person name="Wong C."/>
            <person name="Yamamura Y."/>
            <person name="Yuan S."/>
            <person name="Shinozaki K."/>
            <person name="Davis R.W."/>
            <person name="Theologis A."/>
            <person name="Ecker J.R."/>
        </authorList>
    </citation>
    <scope>NUCLEOTIDE SEQUENCE [LARGE SCALE MRNA]</scope>
    <source>
        <strain>cv. Columbia</strain>
    </source>
</reference>
<reference key="4">
    <citation type="journal article" date="2008" name="Plant Cell">
        <title>Characterization of Arabidopsis and rice DWD proteins and their roles as substrate receptors for CUL4-RING E3 ubiquitin ligases.</title>
        <authorList>
            <person name="Lee J.H."/>
            <person name="Terzaghi W."/>
            <person name="Gusmaroli G."/>
            <person name="Charron J.B."/>
            <person name="Yoon H.J."/>
            <person name="Chen H."/>
            <person name="He Y.J."/>
            <person name="Xiong Y."/>
            <person name="Deng X.W."/>
        </authorList>
    </citation>
    <scope>DWD MOTIF</scope>
</reference>
<reference key="5">
    <citation type="journal article" date="2009" name="J. Proteomics">
        <title>Phosphoproteomic analysis of nuclei-enriched fractions from Arabidopsis thaliana.</title>
        <authorList>
            <person name="Jones A.M.E."/>
            <person name="MacLean D."/>
            <person name="Studholme D.J."/>
            <person name="Serna-Sanz A."/>
            <person name="Andreasson E."/>
            <person name="Rathjen J.P."/>
            <person name="Peck S.C."/>
        </authorList>
    </citation>
    <scope>PHOSPHORYLATION [LARGE SCALE ANALYSIS] AT SER-33</scope>
    <scope>IDENTIFICATION BY MASS SPECTROMETRY [LARGE SCALE ANALYSIS]</scope>
    <source>
        <strain>cv. Columbia</strain>
    </source>
</reference>
<reference key="6">
    <citation type="journal article" date="2009" name="Plant Physiol.">
        <title>Large-scale Arabidopsis phosphoproteome profiling reveals novel chloroplast kinase substrates and phosphorylation networks.</title>
        <authorList>
            <person name="Reiland S."/>
            <person name="Messerli G."/>
            <person name="Baerenfaller K."/>
            <person name="Gerrits B."/>
            <person name="Endler A."/>
            <person name="Grossmann J."/>
            <person name="Gruissem W."/>
            <person name="Baginsky S."/>
        </authorList>
    </citation>
    <scope>PHOSPHORYLATION [LARGE SCALE ANALYSIS] AT SER-33</scope>
    <scope>IDENTIFICATION BY MASS SPECTROMETRY [LARGE SCALE ANALYSIS]</scope>
</reference>